<dbReference type="EMBL" id="BA000031">
    <property type="protein sequence ID" value="BAC60344.1"/>
    <property type="molecule type" value="Genomic_DNA"/>
</dbReference>
<dbReference type="RefSeq" id="NP_798460.1">
    <property type="nucleotide sequence ID" value="NC_004603.1"/>
</dbReference>
<dbReference type="GeneID" id="1189592"/>
<dbReference type="KEGG" id="vpa:VP2081"/>
<dbReference type="PATRIC" id="fig|223926.6.peg.1992"/>
<dbReference type="eggNOG" id="COG3092">
    <property type="taxonomic scope" value="Bacteria"/>
</dbReference>
<dbReference type="HOGENOM" id="CLU_128746_0_0_6"/>
<dbReference type="Proteomes" id="UP000002493">
    <property type="component" value="Chromosome 1"/>
</dbReference>
<dbReference type="GO" id="GO:0005886">
    <property type="term" value="C:plasma membrane"/>
    <property type="evidence" value="ECO:0007669"/>
    <property type="project" value="UniProtKB-SubCell"/>
</dbReference>
<dbReference type="HAMAP" id="MF_01101">
    <property type="entry name" value="UPF0208"/>
    <property type="match status" value="1"/>
</dbReference>
<dbReference type="InterPro" id="IPR007334">
    <property type="entry name" value="UPF0208"/>
</dbReference>
<dbReference type="NCBIfam" id="NF002493">
    <property type="entry name" value="PRK01816.1"/>
    <property type="match status" value="1"/>
</dbReference>
<dbReference type="Pfam" id="PF04217">
    <property type="entry name" value="DUF412"/>
    <property type="match status" value="1"/>
</dbReference>
<protein>
    <recommendedName>
        <fullName evidence="1">UPF0208 membrane protein VP2081</fullName>
    </recommendedName>
</protein>
<reference key="1">
    <citation type="journal article" date="2003" name="Lancet">
        <title>Genome sequence of Vibrio parahaemolyticus: a pathogenic mechanism distinct from that of V. cholerae.</title>
        <authorList>
            <person name="Makino K."/>
            <person name="Oshima K."/>
            <person name="Kurokawa K."/>
            <person name="Yokoyama K."/>
            <person name="Uda T."/>
            <person name="Tagomori K."/>
            <person name="Iijima Y."/>
            <person name="Najima M."/>
            <person name="Nakano M."/>
            <person name="Yamashita A."/>
            <person name="Kubota Y."/>
            <person name="Kimura S."/>
            <person name="Yasunaga T."/>
            <person name="Honda T."/>
            <person name="Shinagawa H."/>
            <person name="Hattori M."/>
            <person name="Iida T."/>
        </authorList>
    </citation>
    <scope>NUCLEOTIDE SEQUENCE [LARGE SCALE GENOMIC DNA]</scope>
    <source>
        <strain>RIMD 2210633</strain>
    </source>
</reference>
<keyword id="KW-0997">Cell inner membrane</keyword>
<keyword id="KW-1003">Cell membrane</keyword>
<keyword id="KW-0472">Membrane</keyword>
<keyword id="KW-0812">Transmembrane</keyword>
<keyword id="KW-1133">Transmembrane helix</keyword>
<sequence length="150" mass="17108">MSNKVGLIHSLKDGQSYMEIWPVRKELGAIFPEQRIIKATRFGIKVMPAVAAISVLTQMAFNNYNALPQSIVVALFAISLPLQGIWWLGARSNTKLPPSLASWYRELHQKIVETGFALEPVKARPRYKELAIILNRAFRQLDKSSLERWF</sequence>
<feature type="chain" id="PRO_0000080825" description="UPF0208 membrane protein VP2081">
    <location>
        <begin position="1"/>
        <end position="150"/>
    </location>
</feature>
<feature type="transmembrane region" description="Helical" evidence="1">
    <location>
        <begin position="42"/>
        <end position="62"/>
    </location>
</feature>
<feature type="transmembrane region" description="Helical" evidence="1">
    <location>
        <begin position="70"/>
        <end position="90"/>
    </location>
</feature>
<gene>
    <name type="ordered locus">VP2081</name>
</gene>
<proteinExistence type="inferred from homology"/>
<organism>
    <name type="scientific">Vibrio parahaemolyticus serotype O3:K6 (strain RIMD 2210633)</name>
    <dbReference type="NCBI Taxonomy" id="223926"/>
    <lineage>
        <taxon>Bacteria</taxon>
        <taxon>Pseudomonadati</taxon>
        <taxon>Pseudomonadota</taxon>
        <taxon>Gammaproteobacteria</taxon>
        <taxon>Vibrionales</taxon>
        <taxon>Vibrionaceae</taxon>
        <taxon>Vibrio</taxon>
    </lineage>
</organism>
<name>Y2081_VIBPA</name>
<evidence type="ECO:0000255" key="1">
    <source>
        <dbReference type="HAMAP-Rule" id="MF_01101"/>
    </source>
</evidence>
<comment type="subcellular location">
    <subcellularLocation>
        <location evidence="1">Cell inner membrane</location>
        <topology evidence="1">Multi-pass membrane protein</topology>
    </subcellularLocation>
</comment>
<comment type="similarity">
    <text evidence="1">Belongs to the UPF0208 family.</text>
</comment>
<accession>Q87MZ5</accession>